<gene>
    <name evidence="1" type="primary">lspA</name>
    <name type="ordered locus">CKO_03365</name>
</gene>
<name>LSPA_CITK8</name>
<organism>
    <name type="scientific">Citrobacter koseri (strain ATCC BAA-895 / CDC 4225-83 / SGSC4696)</name>
    <dbReference type="NCBI Taxonomy" id="290338"/>
    <lineage>
        <taxon>Bacteria</taxon>
        <taxon>Pseudomonadati</taxon>
        <taxon>Pseudomonadota</taxon>
        <taxon>Gammaproteobacteria</taxon>
        <taxon>Enterobacterales</taxon>
        <taxon>Enterobacteriaceae</taxon>
        <taxon>Citrobacter</taxon>
    </lineage>
</organism>
<protein>
    <recommendedName>
        <fullName evidence="1">Lipoprotein signal peptidase</fullName>
        <ecNumber evidence="1">3.4.23.36</ecNumber>
    </recommendedName>
    <alternativeName>
        <fullName evidence="1">Prolipoprotein signal peptidase</fullName>
    </alternativeName>
    <alternativeName>
        <fullName evidence="1">Signal peptidase II</fullName>
        <shortName evidence="1">SPase II</shortName>
    </alternativeName>
</protein>
<dbReference type="EC" id="3.4.23.36" evidence="1"/>
<dbReference type="EMBL" id="CP000822">
    <property type="protein sequence ID" value="ABV14448.1"/>
    <property type="molecule type" value="Genomic_DNA"/>
</dbReference>
<dbReference type="RefSeq" id="WP_012134151.1">
    <property type="nucleotide sequence ID" value="NC_009792.1"/>
</dbReference>
<dbReference type="SMR" id="A8ALT5"/>
<dbReference type="STRING" id="290338.CKO_03365"/>
<dbReference type="MEROPS" id="A08.001"/>
<dbReference type="GeneID" id="45137125"/>
<dbReference type="KEGG" id="cko:CKO_03365"/>
<dbReference type="HOGENOM" id="CLU_083252_4_0_6"/>
<dbReference type="OrthoDB" id="9810259at2"/>
<dbReference type="UniPathway" id="UPA00665"/>
<dbReference type="Proteomes" id="UP000008148">
    <property type="component" value="Chromosome"/>
</dbReference>
<dbReference type="GO" id="GO:0005886">
    <property type="term" value="C:plasma membrane"/>
    <property type="evidence" value="ECO:0007669"/>
    <property type="project" value="UniProtKB-SubCell"/>
</dbReference>
<dbReference type="GO" id="GO:0004190">
    <property type="term" value="F:aspartic-type endopeptidase activity"/>
    <property type="evidence" value="ECO:0007669"/>
    <property type="project" value="UniProtKB-UniRule"/>
</dbReference>
<dbReference type="GO" id="GO:0006508">
    <property type="term" value="P:proteolysis"/>
    <property type="evidence" value="ECO:0007669"/>
    <property type="project" value="UniProtKB-KW"/>
</dbReference>
<dbReference type="HAMAP" id="MF_00161">
    <property type="entry name" value="LspA"/>
    <property type="match status" value="1"/>
</dbReference>
<dbReference type="InterPro" id="IPR001872">
    <property type="entry name" value="Peptidase_A8"/>
</dbReference>
<dbReference type="NCBIfam" id="TIGR00077">
    <property type="entry name" value="lspA"/>
    <property type="match status" value="1"/>
</dbReference>
<dbReference type="PANTHER" id="PTHR33695">
    <property type="entry name" value="LIPOPROTEIN SIGNAL PEPTIDASE"/>
    <property type="match status" value="1"/>
</dbReference>
<dbReference type="PANTHER" id="PTHR33695:SF1">
    <property type="entry name" value="LIPOPROTEIN SIGNAL PEPTIDASE"/>
    <property type="match status" value="1"/>
</dbReference>
<dbReference type="Pfam" id="PF01252">
    <property type="entry name" value="Peptidase_A8"/>
    <property type="match status" value="1"/>
</dbReference>
<dbReference type="PRINTS" id="PR00781">
    <property type="entry name" value="LIPOSIGPTASE"/>
</dbReference>
<dbReference type="PROSITE" id="PS00855">
    <property type="entry name" value="SPASE_II"/>
    <property type="match status" value="1"/>
</dbReference>
<evidence type="ECO:0000255" key="1">
    <source>
        <dbReference type="HAMAP-Rule" id="MF_00161"/>
    </source>
</evidence>
<keyword id="KW-0064">Aspartyl protease</keyword>
<keyword id="KW-0997">Cell inner membrane</keyword>
<keyword id="KW-1003">Cell membrane</keyword>
<keyword id="KW-0378">Hydrolase</keyword>
<keyword id="KW-0472">Membrane</keyword>
<keyword id="KW-0645">Protease</keyword>
<keyword id="KW-1185">Reference proteome</keyword>
<keyword id="KW-0812">Transmembrane</keyword>
<keyword id="KW-1133">Transmembrane helix</keyword>
<feature type="chain" id="PRO_1000038798" description="Lipoprotein signal peptidase">
    <location>
        <begin position="1"/>
        <end position="162"/>
    </location>
</feature>
<feature type="transmembrane region" description="Helical" evidence="1">
    <location>
        <begin position="12"/>
        <end position="32"/>
    </location>
</feature>
<feature type="transmembrane region" description="Helical" evidence="1">
    <location>
        <begin position="70"/>
        <end position="90"/>
    </location>
</feature>
<feature type="transmembrane region" description="Helical" evidence="1">
    <location>
        <begin position="102"/>
        <end position="122"/>
    </location>
</feature>
<feature type="transmembrane region" description="Helical" evidence="1">
    <location>
        <begin position="137"/>
        <end position="157"/>
    </location>
</feature>
<feature type="active site" evidence="1">
    <location>
        <position position="123"/>
    </location>
</feature>
<feature type="active site" evidence="1">
    <location>
        <position position="141"/>
    </location>
</feature>
<proteinExistence type="inferred from homology"/>
<sequence length="162" mass="17979">MSKPLCSTGLRWLWLVVVVLIIDLGSKYLILQNFALGDTVSLFSSLNLHYARNYGAAFSFLADSGGWQRWFFAGIAIGICVILMVMMYRSKATQKLNNIAYALIIGGALGNLFDRLWHGFVVDMIDFYVGDWHFATFNLADSAICIGAALIVLEGFLPKKQA</sequence>
<comment type="function">
    <text evidence="1">This protein specifically catalyzes the removal of signal peptides from prolipoproteins.</text>
</comment>
<comment type="catalytic activity">
    <reaction evidence="1">
        <text>Release of signal peptides from bacterial membrane prolipoproteins. Hydrolyzes -Xaa-Yaa-Zaa-|-(S,diacylglyceryl)Cys-, in which Xaa is hydrophobic (preferably Leu), and Yaa (Ala or Ser) and Zaa (Gly or Ala) have small, neutral side chains.</text>
        <dbReference type="EC" id="3.4.23.36"/>
    </reaction>
</comment>
<comment type="pathway">
    <text evidence="1">Protein modification; lipoprotein biosynthesis (signal peptide cleavage).</text>
</comment>
<comment type="subcellular location">
    <subcellularLocation>
        <location evidence="1">Cell inner membrane</location>
        <topology evidence="1">Multi-pass membrane protein</topology>
    </subcellularLocation>
</comment>
<comment type="similarity">
    <text evidence="1">Belongs to the peptidase A8 family.</text>
</comment>
<accession>A8ALT5</accession>
<reference key="1">
    <citation type="submission" date="2007-08" db="EMBL/GenBank/DDBJ databases">
        <authorList>
            <consortium name="The Citrobacter koseri Genome Sequencing Project"/>
            <person name="McClelland M."/>
            <person name="Sanderson E.K."/>
            <person name="Porwollik S."/>
            <person name="Spieth J."/>
            <person name="Clifton W.S."/>
            <person name="Latreille P."/>
            <person name="Courtney L."/>
            <person name="Wang C."/>
            <person name="Pepin K."/>
            <person name="Bhonagiri V."/>
            <person name="Nash W."/>
            <person name="Johnson M."/>
            <person name="Thiruvilangam P."/>
            <person name="Wilson R."/>
        </authorList>
    </citation>
    <scope>NUCLEOTIDE SEQUENCE [LARGE SCALE GENOMIC DNA]</scope>
    <source>
        <strain>ATCC BAA-895 / CDC 4225-83 / SGSC4696</strain>
    </source>
</reference>